<name>RECO_STRP8</name>
<dbReference type="EMBL" id="AE009949">
    <property type="protein sequence ID" value="AAL96851.1"/>
    <property type="molecule type" value="Genomic_DNA"/>
</dbReference>
<dbReference type="RefSeq" id="WP_002986719.1">
    <property type="nucleotide sequence ID" value="NC_003485.1"/>
</dbReference>
<dbReference type="SMR" id="P65989"/>
<dbReference type="GeneID" id="69900002"/>
<dbReference type="KEGG" id="spm:spyM18_0022"/>
<dbReference type="HOGENOM" id="CLU_066632_4_0_9"/>
<dbReference type="GO" id="GO:0043590">
    <property type="term" value="C:bacterial nucleoid"/>
    <property type="evidence" value="ECO:0007669"/>
    <property type="project" value="TreeGrafter"/>
</dbReference>
<dbReference type="GO" id="GO:0006310">
    <property type="term" value="P:DNA recombination"/>
    <property type="evidence" value="ECO:0007669"/>
    <property type="project" value="UniProtKB-UniRule"/>
</dbReference>
<dbReference type="GO" id="GO:0006302">
    <property type="term" value="P:double-strand break repair"/>
    <property type="evidence" value="ECO:0007669"/>
    <property type="project" value="TreeGrafter"/>
</dbReference>
<dbReference type="Gene3D" id="2.40.50.140">
    <property type="entry name" value="Nucleic acid-binding proteins"/>
    <property type="match status" value="1"/>
</dbReference>
<dbReference type="Gene3D" id="1.20.1440.120">
    <property type="entry name" value="Recombination protein O, C-terminal domain"/>
    <property type="match status" value="1"/>
</dbReference>
<dbReference type="HAMAP" id="MF_00201">
    <property type="entry name" value="RecO"/>
    <property type="match status" value="1"/>
</dbReference>
<dbReference type="InterPro" id="IPR037278">
    <property type="entry name" value="ARFGAP/RecO"/>
</dbReference>
<dbReference type="InterPro" id="IPR022572">
    <property type="entry name" value="DNA_rep/recomb_RecO_N"/>
</dbReference>
<dbReference type="InterPro" id="IPR012340">
    <property type="entry name" value="NA-bd_OB-fold"/>
</dbReference>
<dbReference type="InterPro" id="IPR003717">
    <property type="entry name" value="RecO"/>
</dbReference>
<dbReference type="InterPro" id="IPR042242">
    <property type="entry name" value="RecO_C"/>
</dbReference>
<dbReference type="NCBIfam" id="TIGR00613">
    <property type="entry name" value="reco"/>
    <property type="match status" value="1"/>
</dbReference>
<dbReference type="PANTHER" id="PTHR33991">
    <property type="entry name" value="DNA REPAIR PROTEIN RECO"/>
    <property type="match status" value="1"/>
</dbReference>
<dbReference type="PANTHER" id="PTHR33991:SF1">
    <property type="entry name" value="DNA REPAIR PROTEIN RECO"/>
    <property type="match status" value="1"/>
</dbReference>
<dbReference type="Pfam" id="PF02565">
    <property type="entry name" value="RecO_C"/>
    <property type="match status" value="1"/>
</dbReference>
<dbReference type="Pfam" id="PF11967">
    <property type="entry name" value="RecO_N"/>
    <property type="match status" value="1"/>
</dbReference>
<dbReference type="SUPFAM" id="SSF57863">
    <property type="entry name" value="ArfGap/RecO-like zinc finger"/>
    <property type="match status" value="1"/>
</dbReference>
<dbReference type="SUPFAM" id="SSF50249">
    <property type="entry name" value="Nucleic acid-binding proteins"/>
    <property type="match status" value="1"/>
</dbReference>
<gene>
    <name type="primary">recO</name>
    <name type="ordered locus">spyM18_0022</name>
</gene>
<protein>
    <recommendedName>
        <fullName>DNA repair protein RecO</fullName>
    </recommendedName>
    <alternativeName>
        <fullName>Recombination protein O</fullName>
    </alternativeName>
</protein>
<organism>
    <name type="scientific">Streptococcus pyogenes serotype M18 (strain MGAS8232)</name>
    <dbReference type="NCBI Taxonomy" id="186103"/>
    <lineage>
        <taxon>Bacteria</taxon>
        <taxon>Bacillati</taxon>
        <taxon>Bacillota</taxon>
        <taxon>Bacilli</taxon>
        <taxon>Lactobacillales</taxon>
        <taxon>Streptococcaceae</taxon>
        <taxon>Streptococcus</taxon>
    </lineage>
</organism>
<feature type="chain" id="PRO_0000205014" description="DNA repair protein RecO">
    <location>
        <begin position="1"/>
        <end position="251"/>
    </location>
</feature>
<proteinExistence type="inferred from homology"/>
<reference key="1">
    <citation type="journal article" date="2002" name="Proc. Natl. Acad. Sci. U.S.A.">
        <title>Genome sequence and comparative microarray analysis of serotype M18 group A Streptococcus strains associated with acute rheumatic fever outbreaks.</title>
        <authorList>
            <person name="Smoot J.C."/>
            <person name="Barbian K.D."/>
            <person name="Van Gompel J.J."/>
            <person name="Smoot L.M."/>
            <person name="Chaussee M.S."/>
            <person name="Sylva G.L."/>
            <person name="Sturdevant D.E."/>
            <person name="Ricklefs S.M."/>
            <person name="Porcella S.F."/>
            <person name="Parkins L.D."/>
            <person name="Beres S.B."/>
            <person name="Campbell D.S."/>
            <person name="Smith T.M."/>
            <person name="Zhang Q."/>
            <person name="Kapur V."/>
            <person name="Daly J.A."/>
            <person name="Veasy L.G."/>
            <person name="Musser J.M."/>
        </authorList>
    </citation>
    <scope>NUCLEOTIDE SEQUENCE [LARGE SCALE GENOMIC DNA]</scope>
    <source>
        <strain>MGAS8232</strain>
    </source>
</reference>
<evidence type="ECO:0000250" key="1"/>
<evidence type="ECO:0000305" key="2"/>
<comment type="function">
    <text evidence="1">Involved in DNA repair and RecF pathway recombination.</text>
</comment>
<comment type="similarity">
    <text evidence="2">Belongs to the RecO family.</text>
</comment>
<keyword id="KW-0227">DNA damage</keyword>
<keyword id="KW-0233">DNA recombination</keyword>
<keyword id="KW-0234">DNA repair</keyword>
<sequence length="251" mass="29517">MQLTESLGIVLFNRNYREDDKLVKIFTEVAGKQMFFVKHISRSKMSSIIQPLTIADFIFKLNDTGLSYVVDYSNVNTYRYINNDIFRLAYASYVLALADAAIADNESDSHLFTFLKKTLDLMEEGLDYEILTNIFEIQILDRFGISLNFHECAICHRTDLPLDFSHRFSAVLCSEHYYKDNRRNHLDPNVIYLLSRFQKITFDDLRTISLNKDIKKKLRQFIDELYHDYVGIKLKSKTFIDNLVKWGDIMK</sequence>
<accession>P65989</accession>
<accession>Q9A1Z6</accession>